<protein>
    <recommendedName>
        <fullName evidence="1">Protein RecA</fullName>
    </recommendedName>
    <alternativeName>
        <fullName evidence="1">Recombinase A</fullName>
    </alternativeName>
</protein>
<sequence length="363" mass="38145">MSKDATKEISAPTDAKERSKAIETAMSQIEKAFGKGSIMKLGAESKLDVQVVSTGSLSLDLALGVGGIPRGRITEIYGPESGGKTTLALAIVAQAQKAGGTCAFIDAEHALDPVYARALGVNTDELLVSQPDNGEQALEIMELLVRSGAIDVVVVDSVAALTPRAEIEGDMGDSLPGLQARLMSQALRKLTAILSKTGTAAIFINQVREKIGVMYGNPETTTGGRALKFYASVRLDVRKIGQPTKVGNDAVANTVKIKTVKNKVAAPFKEVELALVYGKGFDQLSDLVGLAADMDIIKKAGSFYSYGDERIGQGKEKTIAYIAERPEMEQEIRDRVMAAIRAGNAGEAPALAPAPAAPEAAEA</sequence>
<gene>
    <name evidence="1" type="primary">recA</name>
    <name type="ordered locus">DR_2340</name>
</gene>
<feature type="chain" id="PRO_0000122700" description="Protein RecA">
    <location>
        <begin position="1"/>
        <end position="363"/>
    </location>
</feature>
<feature type="binding site" evidence="1">
    <location>
        <begin position="78"/>
        <end position="85"/>
    </location>
    <ligand>
        <name>ATP</name>
        <dbReference type="ChEBI" id="CHEBI:30616"/>
    </ligand>
</feature>
<feature type="sequence variant" description="In rec30; DNA-repair deficient.">
    <original>G</original>
    <variation>S</variation>
    <location>
        <position position="224"/>
    </location>
</feature>
<feature type="helix" evidence="5">
    <location>
        <begin position="17"/>
        <end position="33"/>
    </location>
</feature>
<feature type="helix" evidence="5">
    <location>
        <begin position="57"/>
        <end position="62"/>
    </location>
</feature>
<feature type="strand" evidence="5">
    <location>
        <begin position="64"/>
        <end position="69"/>
    </location>
</feature>
<feature type="strand" evidence="5">
    <location>
        <begin position="72"/>
        <end position="79"/>
    </location>
</feature>
<feature type="helix" evidence="5">
    <location>
        <begin position="84"/>
        <end position="97"/>
    </location>
</feature>
<feature type="strand" evidence="5">
    <location>
        <begin position="102"/>
        <end position="108"/>
    </location>
</feature>
<feature type="helix" evidence="5">
    <location>
        <begin position="113"/>
        <end position="118"/>
    </location>
</feature>
<feature type="helix" evidence="5">
    <location>
        <begin position="123"/>
        <end position="125"/>
    </location>
</feature>
<feature type="strand" evidence="5">
    <location>
        <begin position="127"/>
        <end position="129"/>
    </location>
</feature>
<feature type="helix" evidence="5">
    <location>
        <begin position="134"/>
        <end position="145"/>
    </location>
</feature>
<feature type="turn" evidence="5">
    <location>
        <begin position="146"/>
        <end position="148"/>
    </location>
</feature>
<feature type="strand" evidence="5">
    <location>
        <begin position="151"/>
        <end position="156"/>
    </location>
</feature>
<feature type="turn" evidence="5">
    <location>
        <begin position="158"/>
        <end position="160"/>
    </location>
</feature>
<feature type="helix" evidence="5">
    <location>
        <begin position="178"/>
        <end position="194"/>
    </location>
</feature>
<feature type="turn" evidence="5">
    <location>
        <begin position="195"/>
        <end position="197"/>
    </location>
</feature>
<feature type="strand" evidence="5">
    <location>
        <begin position="200"/>
        <end position="206"/>
    </location>
</feature>
<feature type="helix" evidence="5">
    <location>
        <begin position="224"/>
        <end position="230"/>
    </location>
</feature>
<feature type="strand" evidence="5">
    <location>
        <begin position="232"/>
        <end position="241"/>
    </location>
</feature>
<feature type="strand" evidence="5">
    <location>
        <begin position="252"/>
        <end position="265"/>
    </location>
</feature>
<feature type="strand" evidence="5">
    <location>
        <begin position="270"/>
        <end position="276"/>
    </location>
</feature>
<feature type="turn" evidence="5">
    <location>
        <begin position="277"/>
        <end position="279"/>
    </location>
</feature>
<feature type="helix" evidence="5">
    <location>
        <begin position="283"/>
        <end position="293"/>
    </location>
</feature>
<feature type="strand" evidence="5">
    <location>
        <begin position="296"/>
        <end position="300"/>
    </location>
</feature>
<feature type="strand" evidence="5">
    <location>
        <begin position="303"/>
        <end position="314"/>
    </location>
</feature>
<feature type="helix" evidence="5">
    <location>
        <begin position="315"/>
        <end position="322"/>
    </location>
</feature>
<feature type="helix" evidence="5">
    <location>
        <begin position="326"/>
        <end position="340"/>
    </location>
</feature>
<reference key="1">
    <citation type="journal article" date="1994" name="Gene">
        <title>Sequencing, targeted mutagenesis and expression of a recA gene required for the extreme radioresistance of Deinococcus radiodurans.</title>
        <authorList>
            <person name="Gutman P.D."/>
            <person name="Carroll J.D."/>
            <person name="Masters C.I."/>
            <person name="Minton K.W."/>
        </authorList>
    </citation>
    <scope>NUCLEOTIDE SEQUENCE [GENOMIC DNA]</scope>
    <source>
        <strain>ATCC 13939 / DSM 20539 / JCM 16871 / CCUG 27074 / LMG 4051 / NBRC 15346 / NCIMB 9279 / VKM B-1422 / R1</strain>
    </source>
</reference>
<reference key="2">
    <citation type="submission" date="1998-08" db="EMBL/GenBank/DDBJ databases">
        <authorList>
            <person name="Carroll J.D."/>
        </authorList>
    </citation>
    <scope>SEQUENCE REVISION</scope>
</reference>
<reference key="3">
    <citation type="journal article" date="1999" name="Mutat. Res.">
        <title>Molecular analysis of the Deinococcus radiodurans recA locus and identification of a mutation site in a DNA repair-deficient mutant, rec30.</title>
        <authorList>
            <person name="Narumi I."/>
            <person name="Satoh K."/>
            <person name="Kikuchi M."/>
            <person name="Funayama T."/>
            <person name="Kitayama S."/>
            <person name="Yanagisawa T."/>
            <person name="Watanabe H."/>
            <person name="Yamamoto K."/>
        </authorList>
    </citation>
    <scope>NUCLEOTIDE SEQUENCE [GENOMIC DNA]</scope>
    <scope>MUTANT REC30</scope>
    <source>
        <strain>KD8301</strain>
    </source>
</reference>
<reference key="4">
    <citation type="journal article" date="1999" name="Science">
        <title>Genome sequence of the radioresistant bacterium Deinococcus radiodurans R1.</title>
        <authorList>
            <person name="White O."/>
            <person name="Eisen J.A."/>
            <person name="Heidelberg J.F."/>
            <person name="Hickey E.K."/>
            <person name="Peterson J.D."/>
            <person name="Dodson R.J."/>
            <person name="Haft D.H."/>
            <person name="Gwinn M.L."/>
            <person name="Nelson W.C."/>
            <person name="Richardson D.L."/>
            <person name="Moffat K.S."/>
            <person name="Qin H."/>
            <person name="Jiang L."/>
            <person name="Pamphile W."/>
            <person name="Crosby M."/>
            <person name="Shen M."/>
            <person name="Vamathevan J.J."/>
            <person name="Lam P."/>
            <person name="McDonald L.A."/>
            <person name="Utterback T.R."/>
            <person name="Zalewski C."/>
            <person name="Makarova K.S."/>
            <person name="Aravind L."/>
            <person name="Daly M.J."/>
            <person name="Minton K.W."/>
            <person name="Fleischmann R.D."/>
            <person name="Ketchum K.A."/>
            <person name="Nelson K.E."/>
            <person name="Salzberg S.L."/>
            <person name="Smith H.O."/>
            <person name="Venter J.C."/>
            <person name="Fraser C.M."/>
        </authorList>
    </citation>
    <scope>NUCLEOTIDE SEQUENCE [LARGE SCALE GENOMIC DNA]</scope>
    <source>
        <strain>ATCC 13939 / DSM 20539 / JCM 16871 / CCUG 27074 / LMG 4051 / NBRC 15346 / NCIMB 9279 / VKM B-1422 / R1</strain>
    </source>
</reference>
<reference key="5">
    <citation type="journal article" date="2010" name="DNA Repair">
        <title>DdrB stimulates single-stranded DNA annealing and facilitates RecA-independent DNA repair in Deinococcus radiodurans.</title>
        <authorList>
            <person name="Xu G."/>
            <person name="Lu H."/>
            <person name="Wang L."/>
            <person name="Chen H."/>
            <person name="Xu Z."/>
            <person name="Hu Y."/>
            <person name="Tian B."/>
            <person name="Hua Y."/>
        </authorList>
    </citation>
    <scope>DISRUPTION PHENOTYPE</scope>
    <source>
        <strain>ATCC 13939 / DSM 20539 / JCM 16871 / CCUG 27074 / LMG 4051 / NBRC 15346 / NCIMB 9279 / VKM B-1422 / R1</strain>
    </source>
</reference>
<reference key="6">
    <citation type="journal article" date="2009" name="Cell">
        <title>Recombination and replication in DNA repair of heavily irradiated Deinococcus radiodurans.</title>
        <authorList>
            <person name="Slade D."/>
            <person name="Lindner A.B."/>
            <person name="Paul G."/>
            <person name="Radman M."/>
        </authorList>
    </citation>
    <scope>FUNCTION</scope>
    <scope>DISRUPTION PHENOTYPE</scope>
    <source>
        <strain>ATCC 13939 / DSM 20539 / JCM 16871 / CCUG 27074 / LMG 4051 / NBRC 15346 / NCIMB 9279 / VKM B-1422 / R1</strain>
    </source>
</reference>
<proteinExistence type="evidence at protein level"/>
<organism>
    <name type="scientific">Deinococcus radiodurans (strain ATCC 13939 / DSM 20539 / JCM 16871 / CCUG 27074 / LMG 4051 / NBRC 15346 / NCIMB 9279 / VKM B-1422 / R1)</name>
    <dbReference type="NCBI Taxonomy" id="243230"/>
    <lineage>
        <taxon>Bacteria</taxon>
        <taxon>Thermotogati</taxon>
        <taxon>Deinococcota</taxon>
        <taxon>Deinococci</taxon>
        <taxon>Deinococcales</taxon>
        <taxon>Deinococcaceae</taxon>
        <taxon>Deinococcus</taxon>
    </lineage>
</organism>
<name>RECA_DEIRA</name>
<dbReference type="EMBL" id="U01876">
    <property type="protein sequence ID" value="AAC33148.1"/>
    <property type="molecule type" value="Genomic_DNA"/>
</dbReference>
<dbReference type="EMBL" id="AB005471">
    <property type="protein sequence ID" value="BAA21330.1"/>
    <property type="molecule type" value="Genomic_DNA"/>
</dbReference>
<dbReference type="EMBL" id="AE000513">
    <property type="protein sequence ID" value="AAF11887.1"/>
    <property type="molecule type" value="Genomic_DNA"/>
</dbReference>
<dbReference type="PIR" id="C75285">
    <property type="entry name" value="C75285"/>
</dbReference>
<dbReference type="RefSeq" id="NP_296061.1">
    <property type="nucleotide sequence ID" value="NC_001263.1"/>
</dbReference>
<dbReference type="RefSeq" id="WP_010888966.1">
    <property type="nucleotide sequence ID" value="NC_001263.1"/>
</dbReference>
<dbReference type="PDB" id="1XP8">
    <property type="method" value="X-ray"/>
    <property type="resolution" value="2.50 A"/>
    <property type="chains" value="A=1-363"/>
</dbReference>
<dbReference type="PDBsum" id="1XP8"/>
<dbReference type="SMR" id="P42443"/>
<dbReference type="FunCoup" id="P42443">
    <property type="interactions" value="453"/>
</dbReference>
<dbReference type="STRING" id="243230.DR_2340"/>
<dbReference type="DrugBank" id="DB02930">
    <property type="generic name" value="Adenosine 5'-[gamma-thio]triphosphate"/>
</dbReference>
<dbReference type="PaxDb" id="243230-DR_2340"/>
<dbReference type="EnsemblBacteria" id="AAF11887">
    <property type="protein sequence ID" value="AAF11887"/>
    <property type="gene ID" value="DR_2340"/>
</dbReference>
<dbReference type="GeneID" id="69518589"/>
<dbReference type="KEGG" id="dra:DR_2340"/>
<dbReference type="PATRIC" id="fig|243230.17.peg.2571"/>
<dbReference type="eggNOG" id="COG0468">
    <property type="taxonomic scope" value="Bacteria"/>
</dbReference>
<dbReference type="HOGENOM" id="CLU_040469_3_2_0"/>
<dbReference type="InParanoid" id="P42443"/>
<dbReference type="OrthoDB" id="9776733at2"/>
<dbReference type="EvolutionaryTrace" id="P42443"/>
<dbReference type="Proteomes" id="UP000002524">
    <property type="component" value="Chromosome 1"/>
</dbReference>
<dbReference type="GO" id="GO:0005737">
    <property type="term" value="C:cytoplasm"/>
    <property type="evidence" value="ECO:0007669"/>
    <property type="project" value="UniProtKB-SubCell"/>
</dbReference>
<dbReference type="GO" id="GO:0005524">
    <property type="term" value="F:ATP binding"/>
    <property type="evidence" value="ECO:0007669"/>
    <property type="project" value="UniProtKB-UniRule"/>
</dbReference>
<dbReference type="GO" id="GO:0016887">
    <property type="term" value="F:ATP hydrolysis activity"/>
    <property type="evidence" value="ECO:0007669"/>
    <property type="project" value="InterPro"/>
</dbReference>
<dbReference type="GO" id="GO:0140664">
    <property type="term" value="F:ATP-dependent DNA damage sensor activity"/>
    <property type="evidence" value="ECO:0007669"/>
    <property type="project" value="InterPro"/>
</dbReference>
<dbReference type="GO" id="GO:0003684">
    <property type="term" value="F:damaged DNA binding"/>
    <property type="evidence" value="ECO:0007669"/>
    <property type="project" value="UniProtKB-UniRule"/>
</dbReference>
<dbReference type="GO" id="GO:0003697">
    <property type="term" value="F:single-stranded DNA binding"/>
    <property type="evidence" value="ECO:0007669"/>
    <property type="project" value="UniProtKB-UniRule"/>
</dbReference>
<dbReference type="GO" id="GO:0006310">
    <property type="term" value="P:DNA recombination"/>
    <property type="evidence" value="ECO:0007669"/>
    <property type="project" value="UniProtKB-UniRule"/>
</dbReference>
<dbReference type="GO" id="GO:0006302">
    <property type="term" value="P:double-strand break repair"/>
    <property type="evidence" value="ECO:0000315"/>
    <property type="project" value="CACAO"/>
</dbReference>
<dbReference type="GO" id="GO:0009432">
    <property type="term" value="P:SOS response"/>
    <property type="evidence" value="ECO:0007669"/>
    <property type="project" value="UniProtKB-UniRule"/>
</dbReference>
<dbReference type="CDD" id="cd00983">
    <property type="entry name" value="RecA"/>
    <property type="match status" value="1"/>
</dbReference>
<dbReference type="FunFam" id="3.40.50.300:FF:000087">
    <property type="entry name" value="Recombinase RecA"/>
    <property type="match status" value="1"/>
</dbReference>
<dbReference type="Gene3D" id="3.40.50.300">
    <property type="entry name" value="P-loop containing nucleotide triphosphate hydrolases"/>
    <property type="match status" value="1"/>
</dbReference>
<dbReference type="HAMAP" id="MF_00268">
    <property type="entry name" value="RecA"/>
    <property type="match status" value="1"/>
</dbReference>
<dbReference type="InterPro" id="IPR003593">
    <property type="entry name" value="AAA+_ATPase"/>
</dbReference>
<dbReference type="InterPro" id="IPR013765">
    <property type="entry name" value="DNA_recomb/repair_RecA"/>
</dbReference>
<dbReference type="InterPro" id="IPR020584">
    <property type="entry name" value="DNA_recomb/repair_RecA_CS"/>
</dbReference>
<dbReference type="InterPro" id="IPR027417">
    <property type="entry name" value="P-loop_NTPase"/>
</dbReference>
<dbReference type="InterPro" id="IPR049261">
    <property type="entry name" value="RecA-like_C"/>
</dbReference>
<dbReference type="InterPro" id="IPR049428">
    <property type="entry name" value="RecA-like_N"/>
</dbReference>
<dbReference type="InterPro" id="IPR020588">
    <property type="entry name" value="RecA_ATP-bd"/>
</dbReference>
<dbReference type="InterPro" id="IPR023400">
    <property type="entry name" value="RecA_C_sf"/>
</dbReference>
<dbReference type="InterPro" id="IPR020587">
    <property type="entry name" value="RecA_monomer-monomer_interface"/>
</dbReference>
<dbReference type="NCBIfam" id="TIGR02012">
    <property type="entry name" value="tigrfam_recA"/>
    <property type="match status" value="1"/>
</dbReference>
<dbReference type="PANTHER" id="PTHR45900:SF1">
    <property type="entry name" value="MITOCHONDRIAL DNA REPAIR PROTEIN RECA HOMOLOG-RELATED"/>
    <property type="match status" value="1"/>
</dbReference>
<dbReference type="PANTHER" id="PTHR45900">
    <property type="entry name" value="RECA"/>
    <property type="match status" value="1"/>
</dbReference>
<dbReference type="Pfam" id="PF00154">
    <property type="entry name" value="RecA"/>
    <property type="match status" value="1"/>
</dbReference>
<dbReference type="Pfam" id="PF21096">
    <property type="entry name" value="RecA_C"/>
    <property type="match status" value="1"/>
</dbReference>
<dbReference type="PRINTS" id="PR00142">
    <property type="entry name" value="RECA"/>
</dbReference>
<dbReference type="SMART" id="SM00382">
    <property type="entry name" value="AAA"/>
    <property type="match status" value="1"/>
</dbReference>
<dbReference type="SUPFAM" id="SSF52540">
    <property type="entry name" value="P-loop containing nucleoside triphosphate hydrolases"/>
    <property type="match status" value="1"/>
</dbReference>
<dbReference type="SUPFAM" id="SSF54752">
    <property type="entry name" value="RecA protein, C-terminal domain"/>
    <property type="match status" value="1"/>
</dbReference>
<dbReference type="PROSITE" id="PS00321">
    <property type="entry name" value="RECA_1"/>
    <property type="match status" value="1"/>
</dbReference>
<dbReference type="PROSITE" id="PS50162">
    <property type="entry name" value="RECA_2"/>
    <property type="match status" value="1"/>
</dbReference>
<dbReference type="PROSITE" id="PS50163">
    <property type="entry name" value="RECA_3"/>
    <property type="match status" value="1"/>
</dbReference>
<accession>P42443</accession>
<accession>O32510</accession>
<keyword id="KW-0002">3D-structure</keyword>
<keyword id="KW-0067">ATP-binding</keyword>
<keyword id="KW-0963">Cytoplasm</keyword>
<keyword id="KW-0227">DNA damage</keyword>
<keyword id="KW-0233">DNA recombination</keyword>
<keyword id="KW-0234">DNA repair</keyword>
<keyword id="KW-0238">DNA-binding</keyword>
<keyword id="KW-0547">Nucleotide-binding</keyword>
<keyword id="KW-1185">Reference proteome</keyword>
<keyword id="KW-0742">SOS response</keyword>
<comment type="function">
    <text evidence="1 4">Can catalyze the hydrolysis of ATP in the presence of single-stranded DNA, the ATP-dependent uptake of single-stranded DNA by duplex DNA, and the ATP-dependent hybridization of homologous single-stranded DNAs. It interacts with LexA causing its activation and leading to its autocatalytic cleavage (By similarity). Probably involved in base excision repair (PubMed:19303848).</text>
</comment>
<comment type="function">
    <text evidence="2">Following severe irradiation (7 kGy of gamma irradiation) genomic DNA is fragmented. DNA is progressively degraded for the first 1.5 hours after IR, in a step promoted by RecA and counterbalanced by DNA Pol I and Pol III, followed by massive DNA synthesis and genome reassembly in the next hour. Optimal priming of DNA synthesis requires both RecA and RadA, Pol III initiates DNA synthesis while both Pol I and Pol III are required for its continuation. In the absence of RecA the majority of the chromosome is still reconstituted, via either single-strand annealing or non-homologous end joining (PubMed:19303848).</text>
</comment>
<comment type="subcellular location">
    <subcellularLocation>
        <location evidence="1">Cytoplasm</location>
    </subcellularLocation>
</comment>
<comment type="disruption phenotype">
    <text evidence="2 3">Reduced DNA synthesis rate even in the absence of ionizing radiation (IR) (PubMed:19303848). Cells lacking this gene have a reduced capacity to survive IR (from 90% survival to &lt;10(-7)), DNA repair following IR is slow (PubMed:19303848, PubMed:20451472). Single recA mutants rarely reconstitutes the whole genome following IR, and their DNA is not degraded post-IR (PubMed:19303848). A double recA-ddrB disruption shows no signs of DNA repair 24 hours after IR (PubMed:20451472). Double recA-radA deletion mutants have a more severe effect than either mutation alone after IR (PubMed:19303848).</text>
</comment>
<comment type="similarity">
    <text evidence="1">Belongs to the RecA family.</text>
</comment>
<evidence type="ECO:0000255" key="1">
    <source>
        <dbReference type="HAMAP-Rule" id="MF_00268"/>
    </source>
</evidence>
<evidence type="ECO:0000269" key="2">
    <source>
    </source>
</evidence>
<evidence type="ECO:0000269" key="3">
    <source>
    </source>
</evidence>
<evidence type="ECO:0000305" key="4">
    <source>
    </source>
</evidence>
<evidence type="ECO:0007829" key="5">
    <source>
        <dbReference type="PDB" id="1XP8"/>
    </source>
</evidence>